<name>3SOFL_NAJNA</name>
<evidence type="ECO:0000250" key="1">
    <source>
        <dbReference type="UniProtKB" id="P14541"/>
    </source>
</evidence>
<evidence type="ECO:0000250" key="2">
    <source>
        <dbReference type="UniProtKB" id="P60301"/>
    </source>
</evidence>
<evidence type="ECO:0000250" key="3">
    <source>
        <dbReference type="UniProtKB" id="P62375"/>
    </source>
</evidence>
<evidence type="ECO:0000269" key="4">
    <source>
    </source>
</evidence>
<evidence type="ECO:0000269" key="5">
    <source>
    </source>
</evidence>
<evidence type="ECO:0000269" key="6">
    <source>
    </source>
</evidence>
<evidence type="ECO:0000303" key="7">
    <source>
    </source>
</evidence>
<evidence type="ECO:0000303" key="8">
    <source>
    </source>
</evidence>
<evidence type="ECO:0000303" key="9">
    <source>
    </source>
</evidence>
<evidence type="ECO:0000305" key="10"/>
<feature type="chain" id="PRO_0000093525" description="Cytotoxin-like basic protein" evidence="4 5">
    <location>
        <begin position="1"/>
        <end position="62"/>
    </location>
</feature>
<feature type="disulfide bond" evidence="2">
    <location>
        <begin position="3"/>
        <end position="22"/>
    </location>
</feature>
<feature type="disulfide bond" evidence="2">
    <location>
        <begin position="15"/>
        <end position="40"/>
    </location>
</feature>
<feature type="disulfide bond" evidence="2">
    <location>
        <begin position="44"/>
        <end position="55"/>
    </location>
</feature>
<feature type="disulfide bond" evidence="2">
    <location>
        <begin position="56"/>
        <end position="61"/>
    </location>
</feature>
<dbReference type="PIR" id="S06674">
    <property type="entry name" value="S06674"/>
</dbReference>
<dbReference type="BMRB" id="P62377"/>
<dbReference type="SMR" id="P62377"/>
<dbReference type="Proteomes" id="UP000694559">
    <property type="component" value="Unplaced"/>
</dbReference>
<dbReference type="GO" id="GO:0005576">
    <property type="term" value="C:extracellular region"/>
    <property type="evidence" value="ECO:0007669"/>
    <property type="project" value="UniProtKB-SubCell"/>
</dbReference>
<dbReference type="GO" id="GO:0016020">
    <property type="term" value="C:membrane"/>
    <property type="evidence" value="ECO:0007669"/>
    <property type="project" value="UniProtKB-KW"/>
</dbReference>
<dbReference type="GO" id="GO:0044218">
    <property type="term" value="C:other organism cell membrane"/>
    <property type="evidence" value="ECO:0007669"/>
    <property type="project" value="UniProtKB-KW"/>
</dbReference>
<dbReference type="GO" id="GO:0090729">
    <property type="term" value="F:toxin activity"/>
    <property type="evidence" value="ECO:0007669"/>
    <property type="project" value="UniProtKB-KW"/>
</dbReference>
<dbReference type="GO" id="GO:0031640">
    <property type="term" value="P:killing of cells of another organism"/>
    <property type="evidence" value="ECO:0007669"/>
    <property type="project" value="UniProtKB-KW"/>
</dbReference>
<dbReference type="CDD" id="cd00206">
    <property type="entry name" value="TFP_snake_toxin"/>
    <property type="match status" value="1"/>
</dbReference>
<dbReference type="FunFam" id="2.10.60.10:FF:000024">
    <property type="entry name" value="Cytotoxin 1"/>
    <property type="match status" value="1"/>
</dbReference>
<dbReference type="Gene3D" id="2.10.60.10">
    <property type="entry name" value="CD59"/>
    <property type="match status" value="1"/>
</dbReference>
<dbReference type="InterPro" id="IPR003572">
    <property type="entry name" value="Cytotoxin_Cobra"/>
</dbReference>
<dbReference type="InterPro" id="IPR003571">
    <property type="entry name" value="Snake_3FTx"/>
</dbReference>
<dbReference type="InterPro" id="IPR045860">
    <property type="entry name" value="Snake_toxin-like_sf"/>
</dbReference>
<dbReference type="InterPro" id="IPR018354">
    <property type="entry name" value="Snake_toxin_con_site"/>
</dbReference>
<dbReference type="InterPro" id="IPR054131">
    <property type="entry name" value="Toxin_cobra-type"/>
</dbReference>
<dbReference type="Pfam" id="PF21947">
    <property type="entry name" value="Toxin_cobra-type"/>
    <property type="match status" value="1"/>
</dbReference>
<dbReference type="PRINTS" id="PR00282">
    <property type="entry name" value="CYTOTOXIN"/>
</dbReference>
<dbReference type="SUPFAM" id="SSF57302">
    <property type="entry name" value="Snake toxin-like"/>
    <property type="match status" value="1"/>
</dbReference>
<dbReference type="PROSITE" id="PS00272">
    <property type="entry name" value="SNAKE_TOXIN"/>
    <property type="match status" value="1"/>
</dbReference>
<accession>P62377</accession>
<accession>P14554</accession>
<sequence length="62" mass="7014">LKCHNTQLPFIYKTCPEGKNLCFKATLKKFPLKFPVKRGCADNCPKNSALLKYVCCSTDKCN</sequence>
<proteinExistence type="evidence at protein level"/>
<organism>
    <name type="scientific">Naja naja</name>
    <name type="common">Indian cobra</name>
    <dbReference type="NCBI Taxonomy" id="35670"/>
    <lineage>
        <taxon>Eukaryota</taxon>
        <taxon>Metazoa</taxon>
        <taxon>Chordata</taxon>
        <taxon>Craniata</taxon>
        <taxon>Vertebrata</taxon>
        <taxon>Euteleostomi</taxon>
        <taxon>Lepidosauria</taxon>
        <taxon>Squamata</taxon>
        <taxon>Bifurcata</taxon>
        <taxon>Unidentata</taxon>
        <taxon>Episquamata</taxon>
        <taxon>Toxicofera</taxon>
        <taxon>Serpentes</taxon>
        <taxon>Colubroidea</taxon>
        <taxon>Elapidae</taxon>
        <taxon>Elapinae</taxon>
        <taxon>Naja</taxon>
    </lineage>
</organism>
<reference key="1">
    <citation type="journal article" date="1989" name="FEBS Lett.">
        <title>Amino acid sequences of cytotoxin-like basic proteins derived from cobra venoms.</title>
        <authorList>
            <person name="Inoue S."/>
            <person name="Okumura K."/>
            <person name="Tsujino M."/>
            <person name="Ohkura K."/>
            <person name="Ikeda K."/>
            <person name="Takechi M."/>
            <person name="Tanaka Y."/>
            <person name="Hayashi K."/>
        </authorList>
    </citation>
    <scope>PROTEIN SEQUENCE</scope>
    <source>
        <tissue>Venom</tissue>
    </source>
</reference>
<reference key="2">
    <citation type="journal article" date="1990" name="FEBS Lett.">
        <title>Characterization of a cytotoxin-like basic protein from the cobra (Naja naja naja) venom.</title>
        <authorList>
            <person name="Shafqat J."/>
            <person name="Zaidi Z.H."/>
            <person name="Joernvall H."/>
        </authorList>
    </citation>
    <scope>PROTEIN SEQUENCE</scope>
    <source>
        <tissue>Venom</tissue>
    </source>
</reference>
<reference key="3">
    <citation type="journal article" date="1987" name="Biochem. Int.">
        <title>Amino acid sequence of a less-cytotoxic basic polypeptide (LCBP) isolated from the venom of the Indian cobra (Naja naja).</title>
        <authorList>
            <person name="Takechi M."/>
            <person name="Tanaka Y."/>
            <person name="Hayashi K."/>
        </authorList>
    </citation>
    <scope>PRELIMINARY PROTEIN SEQUENCE</scope>
    <scope>SUBCELLULAR LOCATION</scope>
    <source>
        <tissue>Venom</tissue>
    </source>
</reference>
<comment type="function">
    <text evidence="1">Has low cytotoxic activity.</text>
</comment>
<comment type="subcellular location">
    <subcellularLocation>
        <location evidence="6">Secreted</location>
    </subcellularLocation>
    <subcellularLocation>
        <location evidence="3">Target cell membrane</location>
    </subcellularLocation>
</comment>
<comment type="tissue specificity">
    <text evidence="10">Expressed by the venom gland.</text>
</comment>
<comment type="toxic dose">
    <text>LD(50) is 60 mg/kg by subcutaneous injection.</text>
</comment>
<comment type="miscellaneous">
    <text evidence="10">Is classified as a P-type cytotoxin, since a proline residue stands at position 31 (Pro-31 in standard classification).</text>
</comment>
<comment type="similarity">
    <text evidence="10">Belongs to the three-finger toxin family. Short-chain subfamily. Orphan group XV sub-subfamily.</text>
</comment>
<keyword id="KW-0204">Cytolysis</keyword>
<keyword id="KW-0903">Direct protein sequencing</keyword>
<keyword id="KW-1015">Disulfide bond</keyword>
<keyword id="KW-0354">Hemolysis</keyword>
<keyword id="KW-0472">Membrane</keyword>
<keyword id="KW-1185">Reference proteome</keyword>
<keyword id="KW-0964">Secreted</keyword>
<keyword id="KW-1052">Target cell membrane</keyword>
<keyword id="KW-1053">Target membrane</keyword>
<keyword id="KW-0800">Toxin</keyword>
<protein>
    <recommendedName>
        <fullName evidence="7 8">Cytotoxin-like basic protein</fullName>
        <shortName evidence="7 8">CLBP</shortName>
    </recommendedName>
    <alternativeName>
        <fullName evidence="9">Less-cytotoxic basic polypeptide</fullName>
        <shortName evidence="9">LCBP</shortName>
    </alternativeName>
</protein>